<name>NRDI_CHRSD</name>
<reference key="1">
    <citation type="journal article" date="2011" name="Stand. Genomic Sci.">
        <title>Complete genome sequence of the halophilic and highly halotolerant Chromohalobacter salexigens type strain (1H11(T)).</title>
        <authorList>
            <person name="Copeland A."/>
            <person name="O'Connor K."/>
            <person name="Lucas S."/>
            <person name="Lapidus A."/>
            <person name="Berry K.W."/>
            <person name="Detter J.C."/>
            <person name="Del Rio T.G."/>
            <person name="Hammon N."/>
            <person name="Dalin E."/>
            <person name="Tice H."/>
            <person name="Pitluck S."/>
            <person name="Bruce D."/>
            <person name="Goodwin L."/>
            <person name="Han C."/>
            <person name="Tapia R."/>
            <person name="Saunders E."/>
            <person name="Schmutz J."/>
            <person name="Brettin T."/>
            <person name="Larimer F."/>
            <person name="Land M."/>
            <person name="Hauser L."/>
            <person name="Vargas C."/>
            <person name="Nieto J.J."/>
            <person name="Kyrpides N.C."/>
            <person name="Ivanova N."/>
            <person name="Goker M."/>
            <person name="Klenk H.P."/>
            <person name="Csonka L.N."/>
            <person name="Woyke T."/>
        </authorList>
    </citation>
    <scope>NUCLEOTIDE SEQUENCE [LARGE SCALE GENOMIC DNA]</scope>
    <source>
        <strain>ATCC BAA-138 / DSM 3043 / CIP 106854 / NCIMB 13768 / 1H11</strain>
    </source>
</reference>
<protein>
    <recommendedName>
        <fullName evidence="1">Protein NrdI</fullName>
    </recommendedName>
</protein>
<accession>Q1R0L8</accession>
<gene>
    <name evidence="1" type="primary">nrdI</name>
    <name type="ordered locus">Csal_0378</name>
</gene>
<sequence length="134" mass="14665">MCDVVYFSTQSGNTRRFVEKLDVPAQRIPRSRNDAPLRVTRPYVLILPTYGDGDPRTAVPGPVIRFLNDPRNRALIQGVVAGGNTNFGAAFGLAGRVVAHKCEVPLLHRFELMGTPEDVAKVRACLAMEMTDVG</sequence>
<comment type="function">
    <text evidence="1">Probably involved in ribonucleotide reductase function.</text>
</comment>
<comment type="similarity">
    <text evidence="1">Belongs to the NrdI family.</text>
</comment>
<evidence type="ECO:0000255" key="1">
    <source>
        <dbReference type="HAMAP-Rule" id="MF_00128"/>
    </source>
</evidence>
<dbReference type="EMBL" id="CP000285">
    <property type="protein sequence ID" value="ABE57740.1"/>
    <property type="molecule type" value="Genomic_DNA"/>
</dbReference>
<dbReference type="RefSeq" id="WP_011505686.1">
    <property type="nucleotide sequence ID" value="NC_007963.1"/>
</dbReference>
<dbReference type="SMR" id="Q1R0L8"/>
<dbReference type="STRING" id="290398.Csal_0378"/>
<dbReference type="GeneID" id="95333122"/>
<dbReference type="KEGG" id="csa:Csal_0378"/>
<dbReference type="eggNOG" id="COG1780">
    <property type="taxonomic scope" value="Bacteria"/>
</dbReference>
<dbReference type="HOGENOM" id="CLU_114845_0_0_6"/>
<dbReference type="OrthoDB" id="350535at2"/>
<dbReference type="Proteomes" id="UP000000239">
    <property type="component" value="Chromosome"/>
</dbReference>
<dbReference type="GO" id="GO:0010181">
    <property type="term" value="F:FMN binding"/>
    <property type="evidence" value="ECO:0007669"/>
    <property type="project" value="InterPro"/>
</dbReference>
<dbReference type="GO" id="GO:0036211">
    <property type="term" value="P:protein modification process"/>
    <property type="evidence" value="ECO:0007669"/>
    <property type="project" value="InterPro"/>
</dbReference>
<dbReference type="Gene3D" id="3.40.50.360">
    <property type="match status" value="1"/>
</dbReference>
<dbReference type="HAMAP" id="MF_00128">
    <property type="entry name" value="NrdI"/>
    <property type="match status" value="1"/>
</dbReference>
<dbReference type="InterPro" id="IPR029039">
    <property type="entry name" value="Flavoprotein-like_sf"/>
</dbReference>
<dbReference type="InterPro" id="IPR020852">
    <property type="entry name" value="RNR_Ib_NrdI_bac"/>
</dbReference>
<dbReference type="InterPro" id="IPR004465">
    <property type="entry name" value="RNR_NrdI"/>
</dbReference>
<dbReference type="NCBIfam" id="TIGR00333">
    <property type="entry name" value="nrdI"/>
    <property type="match status" value="1"/>
</dbReference>
<dbReference type="PANTHER" id="PTHR37297">
    <property type="entry name" value="PROTEIN NRDI"/>
    <property type="match status" value="1"/>
</dbReference>
<dbReference type="PANTHER" id="PTHR37297:SF1">
    <property type="entry name" value="PROTEIN NRDI"/>
    <property type="match status" value="1"/>
</dbReference>
<dbReference type="Pfam" id="PF07972">
    <property type="entry name" value="Flavodoxin_NdrI"/>
    <property type="match status" value="1"/>
</dbReference>
<dbReference type="PIRSF" id="PIRSF005087">
    <property type="entry name" value="NrdI"/>
    <property type="match status" value="1"/>
</dbReference>
<dbReference type="SUPFAM" id="SSF52218">
    <property type="entry name" value="Flavoproteins"/>
    <property type="match status" value="1"/>
</dbReference>
<proteinExistence type="inferred from homology"/>
<keyword id="KW-1185">Reference proteome</keyword>
<feature type="chain" id="PRO_1000016496" description="Protein NrdI">
    <location>
        <begin position="1"/>
        <end position="134"/>
    </location>
</feature>
<organism>
    <name type="scientific">Chromohalobacter salexigens (strain ATCC BAA-138 / DSM 3043 / CIP 106854 / NCIMB 13768 / 1H11)</name>
    <dbReference type="NCBI Taxonomy" id="290398"/>
    <lineage>
        <taxon>Bacteria</taxon>
        <taxon>Pseudomonadati</taxon>
        <taxon>Pseudomonadota</taxon>
        <taxon>Gammaproteobacteria</taxon>
        <taxon>Oceanospirillales</taxon>
        <taxon>Halomonadaceae</taxon>
        <taxon>Chromohalobacter</taxon>
    </lineage>
</organism>